<gene>
    <name type="ordered locus">BB_0468</name>
</gene>
<sequence length="248" mass="28171">MNVRDLSFKLNSIFDINKYEHIDKNLNGLQVGNINAKVNKVAFAVDASFSTLKEAKGNDFLITHHGIFWSKKERIVSNMYDKTKFLIENNLALYSVHLPMDAHSVYSHSKVFSDFLGLKNSFAFANYGGVNLGIIADSVFSFSEILEKIKKENKHILFSKKFKESVNKVAIVSGSGYSFFEEALCHDVDLFITGDTSHQIYSLAEEFGVNLIFAGHYFTETFGLIKLMEDFKIQEDLEVKFICKNTNL</sequence>
<organism>
    <name type="scientific">Borreliella burgdorferi (strain ATCC 35210 / DSM 4680 / CIP 102532 / B31)</name>
    <name type="common">Borrelia burgdorferi</name>
    <dbReference type="NCBI Taxonomy" id="224326"/>
    <lineage>
        <taxon>Bacteria</taxon>
        <taxon>Pseudomonadati</taxon>
        <taxon>Spirochaetota</taxon>
        <taxon>Spirochaetia</taxon>
        <taxon>Spirochaetales</taxon>
        <taxon>Borreliaceae</taxon>
        <taxon>Borreliella</taxon>
    </lineage>
</organism>
<feature type="chain" id="PRO_0000147296" description="GTP cyclohydrolase 1 type 2 homolog">
    <location>
        <begin position="1"/>
        <end position="248"/>
    </location>
</feature>
<feature type="binding site" evidence="1">
    <location>
        <position position="64"/>
    </location>
    <ligand>
        <name>a divalent metal cation</name>
        <dbReference type="ChEBI" id="CHEBI:60240"/>
        <label>1</label>
    </ligand>
</feature>
<feature type="binding site" evidence="1">
    <location>
        <position position="65"/>
    </location>
    <ligand>
        <name>a divalent metal cation</name>
        <dbReference type="ChEBI" id="CHEBI:60240"/>
        <label>2</label>
    </ligand>
</feature>
<feature type="binding site" evidence="1">
    <location>
        <position position="101"/>
    </location>
    <ligand>
        <name>a divalent metal cation</name>
        <dbReference type="ChEBI" id="CHEBI:60240"/>
        <label>1</label>
    </ligand>
</feature>
<feature type="binding site" evidence="1">
    <location>
        <position position="216"/>
    </location>
    <ligand>
        <name>a divalent metal cation</name>
        <dbReference type="ChEBI" id="CHEBI:60240"/>
        <label>2</label>
    </ligand>
</feature>
<feature type="binding site" evidence="1">
    <location>
        <position position="220"/>
    </location>
    <ligand>
        <name>a divalent metal cation</name>
        <dbReference type="ChEBI" id="CHEBI:60240"/>
        <label>1</label>
    </ligand>
</feature>
<feature type="binding site" evidence="1">
    <location>
        <position position="220"/>
    </location>
    <ligand>
        <name>a divalent metal cation</name>
        <dbReference type="ChEBI" id="CHEBI:60240"/>
        <label>2</label>
    </ligand>
</feature>
<accession>O51424</accession>
<comment type="subunit">
    <text evidence="1">Homohexamer.</text>
</comment>
<comment type="similarity">
    <text evidence="2">Belongs to the GTP cyclohydrolase I type 2/NIF3 family.</text>
</comment>
<reference key="1">
    <citation type="journal article" date="1997" name="Nature">
        <title>Genomic sequence of a Lyme disease spirochaete, Borrelia burgdorferi.</title>
        <authorList>
            <person name="Fraser C.M."/>
            <person name="Casjens S."/>
            <person name="Huang W.M."/>
            <person name="Sutton G.G."/>
            <person name="Clayton R.A."/>
            <person name="Lathigra R."/>
            <person name="White O."/>
            <person name="Ketchum K.A."/>
            <person name="Dodson R.J."/>
            <person name="Hickey E.K."/>
            <person name="Gwinn M.L."/>
            <person name="Dougherty B.A."/>
            <person name="Tomb J.-F."/>
            <person name="Fleischmann R.D."/>
            <person name="Richardson D.L."/>
            <person name="Peterson J.D."/>
            <person name="Kerlavage A.R."/>
            <person name="Quackenbush J."/>
            <person name="Salzberg S.L."/>
            <person name="Hanson M."/>
            <person name="van Vugt R."/>
            <person name="Palmer N."/>
            <person name="Adams M.D."/>
            <person name="Gocayne J.D."/>
            <person name="Weidman J.F."/>
            <person name="Utterback T.R."/>
            <person name="Watthey L."/>
            <person name="McDonald L.A."/>
            <person name="Artiach P."/>
            <person name="Bowman C."/>
            <person name="Garland S.A."/>
            <person name="Fujii C."/>
            <person name="Cotton M.D."/>
            <person name="Horst K."/>
            <person name="Roberts K.M."/>
            <person name="Hatch B."/>
            <person name="Smith H.O."/>
            <person name="Venter J.C."/>
        </authorList>
    </citation>
    <scope>NUCLEOTIDE SEQUENCE [LARGE SCALE GENOMIC DNA]</scope>
    <source>
        <strain>ATCC 35210 / DSM 4680 / CIP 102532 / B31</strain>
    </source>
</reference>
<evidence type="ECO:0000250" key="1">
    <source>
        <dbReference type="UniProtKB" id="P0AFP6"/>
    </source>
</evidence>
<evidence type="ECO:0000305" key="2"/>
<protein>
    <recommendedName>
        <fullName>GTP cyclohydrolase 1 type 2 homolog</fullName>
    </recommendedName>
</protein>
<proteinExistence type="inferred from homology"/>
<name>GCH1L_BORBU</name>
<keyword id="KW-0479">Metal-binding</keyword>
<keyword id="KW-1185">Reference proteome</keyword>
<dbReference type="EMBL" id="AE000783">
    <property type="protein sequence ID" value="AAC66826.1"/>
    <property type="molecule type" value="Genomic_DNA"/>
</dbReference>
<dbReference type="PIR" id="C70158">
    <property type="entry name" value="C70158"/>
</dbReference>
<dbReference type="RefSeq" id="NP_212602.1">
    <property type="nucleotide sequence ID" value="NC_001318.1"/>
</dbReference>
<dbReference type="RefSeq" id="WP_002656266.1">
    <property type="nucleotide sequence ID" value="NC_001318.1"/>
</dbReference>
<dbReference type="SMR" id="O51424"/>
<dbReference type="STRING" id="224326.BB_0468"/>
<dbReference type="PaxDb" id="224326-BB_0468"/>
<dbReference type="EnsemblBacteria" id="AAC66826">
    <property type="protein sequence ID" value="AAC66826"/>
    <property type="gene ID" value="BB_0468"/>
</dbReference>
<dbReference type="KEGG" id="bbu:BB_0468"/>
<dbReference type="PATRIC" id="fig|224326.49.peg.861"/>
<dbReference type="HOGENOM" id="CLU_037423_3_0_12"/>
<dbReference type="OrthoDB" id="9792792at2"/>
<dbReference type="Proteomes" id="UP000001807">
    <property type="component" value="Chromosome"/>
</dbReference>
<dbReference type="GO" id="GO:0005737">
    <property type="term" value="C:cytoplasm"/>
    <property type="evidence" value="ECO:0007669"/>
    <property type="project" value="TreeGrafter"/>
</dbReference>
<dbReference type="GO" id="GO:0046872">
    <property type="term" value="F:metal ion binding"/>
    <property type="evidence" value="ECO:0007669"/>
    <property type="project" value="UniProtKB-KW"/>
</dbReference>
<dbReference type="FunFam" id="3.40.1390.30:FF:000001">
    <property type="entry name" value="GTP cyclohydrolase 1 type 2"/>
    <property type="match status" value="1"/>
</dbReference>
<dbReference type="Gene3D" id="3.40.1390.30">
    <property type="entry name" value="NIF3 (NGG1p interacting factor 3)-like"/>
    <property type="match status" value="2"/>
</dbReference>
<dbReference type="InterPro" id="IPR002678">
    <property type="entry name" value="DUF34/NIF3"/>
</dbReference>
<dbReference type="InterPro" id="IPR036069">
    <property type="entry name" value="DUF34/NIF3_sf"/>
</dbReference>
<dbReference type="NCBIfam" id="TIGR00486">
    <property type="entry name" value="YbgI_SA1388"/>
    <property type="match status" value="1"/>
</dbReference>
<dbReference type="PANTHER" id="PTHR13799:SF14">
    <property type="entry name" value="GTP CYCLOHYDROLASE 1 TYPE 2 HOMOLOG"/>
    <property type="match status" value="1"/>
</dbReference>
<dbReference type="PANTHER" id="PTHR13799">
    <property type="entry name" value="NGG1 INTERACTING FACTOR 3"/>
    <property type="match status" value="1"/>
</dbReference>
<dbReference type="Pfam" id="PF01784">
    <property type="entry name" value="DUF34_NIF3"/>
    <property type="match status" value="1"/>
</dbReference>
<dbReference type="SUPFAM" id="SSF102705">
    <property type="entry name" value="NIF3 (NGG1p interacting factor 3)-like"/>
    <property type="match status" value="1"/>
</dbReference>